<name>PSTS2_STRA5</name>
<feature type="signal peptide" evidence="2">
    <location>
        <begin position="1"/>
        <end position="23"/>
    </location>
</feature>
<feature type="chain" id="PRO_0000281669" description="Phosphate-binding protein PstS 2">
    <location>
        <begin position="24"/>
        <end position="293"/>
    </location>
</feature>
<feature type="lipid moiety-binding region" description="N-palmitoyl cysteine" evidence="2">
    <location>
        <position position="24"/>
    </location>
</feature>
<feature type="lipid moiety-binding region" description="S-diacylglycerol cysteine" evidence="2">
    <location>
        <position position="24"/>
    </location>
</feature>
<evidence type="ECO:0000250" key="1"/>
<evidence type="ECO:0000255" key="2">
    <source>
        <dbReference type="PROSITE-ProRule" id="PRU00303"/>
    </source>
</evidence>
<evidence type="ECO:0000305" key="3"/>
<protein>
    <recommendedName>
        <fullName>Phosphate-binding protein PstS 2</fullName>
        <shortName>PBP 2</shortName>
    </recommendedName>
</protein>
<sequence length="293" mass="30899">MKKHKMLSLLAVSGLMGIGILAGCSNDSSSSSKGTINIVSREEGSGTRGAFIELFGIESKNKKGEKVDHTSDAATVTNSTSVMLTTVSKDPSAIGYSSLGSLNSSVKVLKIDGKNATVKDIKSGSYKISRPFNIVTKEGKEKEATKDFIDYILSKDGQAVVEKNGYIPLDNAKAYQAKVSSGKVVIAGSSSVTPVMEKIKEAYHKVNAKVDVEIQQSDSSTGITSAIDGSADIGMASRELDKTESSKGVKATVIATDGIAVVVNKKNKVNDLSTKQVKDIFTGKTTSWSDLSK</sequence>
<accession>Q8CVC9</accession>
<dbReference type="EMBL" id="AE009948">
    <property type="protein sequence ID" value="AAN00826.1"/>
    <property type="molecule type" value="Genomic_DNA"/>
</dbReference>
<dbReference type="PIR" id="A61607">
    <property type="entry name" value="A61607"/>
</dbReference>
<dbReference type="RefSeq" id="NP_688953.1">
    <property type="nucleotide sequence ID" value="NC_004116.1"/>
</dbReference>
<dbReference type="RefSeq" id="WP_000716331.1">
    <property type="nucleotide sequence ID" value="NC_004116.1"/>
</dbReference>
<dbReference type="SMR" id="Q8CVC9"/>
<dbReference type="STRING" id="208435.SAG1966"/>
<dbReference type="KEGG" id="sag:SAG1966"/>
<dbReference type="PATRIC" id="fig|208435.3.peg.1973"/>
<dbReference type="HOGENOM" id="CLU_073531_0_0_9"/>
<dbReference type="OrthoDB" id="9790048at2"/>
<dbReference type="Proteomes" id="UP000000821">
    <property type="component" value="Chromosome"/>
</dbReference>
<dbReference type="GO" id="GO:0005886">
    <property type="term" value="C:plasma membrane"/>
    <property type="evidence" value="ECO:0007669"/>
    <property type="project" value="UniProtKB-SubCell"/>
</dbReference>
<dbReference type="GO" id="GO:0006817">
    <property type="term" value="P:phosphate ion transport"/>
    <property type="evidence" value="ECO:0007669"/>
    <property type="project" value="UniProtKB-KW"/>
</dbReference>
<dbReference type="Gene3D" id="3.40.190.10">
    <property type="entry name" value="Periplasmic binding protein-like II"/>
    <property type="match status" value="2"/>
</dbReference>
<dbReference type="InterPro" id="IPR024370">
    <property type="entry name" value="PBP_domain"/>
</dbReference>
<dbReference type="InterPro" id="IPR050811">
    <property type="entry name" value="Phosphate_ABC_transporter"/>
</dbReference>
<dbReference type="PANTHER" id="PTHR30570">
    <property type="entry name" value="PERIPLASMIC PHOSPHATE BINDING COMPONENT OF PHOSPHATE ABC TRANSPORTER"/>
    <property type="match status" value="1"/>
</dbReference>
<dbReference type="PANTHER" id="PTHR30570:SF1">
    <property type="entry name" value="PHOSPHATE-BINDING PROTEIN PSTS"/>
    <property type="match status" value="1"/>
</dbReference>
<dbReference type="Pfam" id="PF12849">
    <property type="entry name" value="PBP_like_2"/>
    <property type="match status" value="2"/>
</dbReference>
<dbReference type="SUPFAM" id="SSF53850">
    <property type="entry name" value="Periplasmic binding protein-like II"/>
    <property type="match status" value="2"/>
</dbReference>
<dbReference type="PROSITE" id="PS51257">
    <property type="entry name" value="PROKAR_LIPOPROTEIN"/>
    <property type="match status" value="1"/>
</dbReference>
<organism>
    <name type="scientific">Streptococcus agalactiae serotype V (strain ATCC BAA-611 / 2603 V/R)</name>
    <dbReference type="NCBI Taxonomy" id="208435"/>
    <lineage>
        <taxon>Bacteria</taxon>
        <taxon>Bacillati</taxon>
        <taxon>Bacillota</taxon>
        <taxon>Bacilli</taxon>
        <taxon>Lactobacillales</taxon>
        <taxon>Streptococcaceae</taxon>
        <taxon>Streptococcus</taxon>
    </lineage>
</organism>
<reference key="1">
    <citation type="journal article" date="2002" name="Proc. Natl. Acad. Sci. U.S.A.">
        <title>Complete genome sequence and comparative genomic analysis of an emerging human pathogen, serotype V Streptococcus agalactiae.</title>
        <authorList>
            <person name="Tettelin H."/>
            <person name="Masignani V."/>
            <person name="Cieslewicz M.J."/>
            <person name="Eisen J.A."/>
            <person name="Peterson S.N."/>
            <person name="Wessels M.R."/>
            <person name="Paulsen I.T."/>
            <person name="Nelson K.E."/>
            <person name="Margarit I."/>
            <person name="Read T.D."/>
            <person name="Madoff L.C."/>
            <person name="Wolf A.M."/>
            <person name="Beanan M.J."/>
            <person name="Brinkac L.M."/>
            <person name="Daugherty S.C."/>
            <person name="DeBoy R.T."/>
            <person name="Durkin A.S."/>
            <person name="Kolonay J.F."/>
            <person name="Madupu R."/>
            <person name="Lewis M.R."/>
            <person name="Radune D."/>
            <person name="Fedorova N.B."/>
            <person name="Scanlan D."/>
            <person name="Khouri H.M."/>
            <person name="Mulligan S."/>
            <person name="Carty H.A."/>
            <person name="Cline R.T."/>
            <person name="Van Aken S.E."/>
            <person name="Gill J."/>
            <person name="Scarselli M."/>
            <person name="Mora M."/>
            <person name="Iacobini E.T."/>
            <person name="Brettoni C."/>
            <person name="Galli G."/>
            <person name="Mariani M."/>
            <person name="Vegni F."/>
            <person name="Maione D."/>
            <person name="Rinaudo D."/>
            <person name="Rappuoli R."/>
            <person name="Telford J.L."/>
            <person name="Kasper D.L."/>
            <person name="Grandi G."/>
            <person name="Fraser C.M."/>
        </authorList>
    </citation>
    <scope>NUCLEOTIDE SEQUENCE [LARGE SCALE GENOMIC DNA]</scope>
    <source>
        <strain>ATCC BAA-611 / 2603 V/R</strain>
    </source>
</reference>
<proteinExistence type="inferred from homology"/>
<keyword id="KW-1003">Cell membrane</keyword>
<keyword id="KW-0449">Lipoprotein</keyword>
<keyword id="KW-0472">Membrane</keyword>
<keyword id="KW-0564">Palmitate</keyword>
<keyword id="KW-0592">Phosphate transport</keyword>
<keyword id="KW-1185">Reference proteome</keyword>
<keyword id="KW-0732">Signal</keyword>
<keyword id="KW-0813">Transport</keyword>
<gene>
    <name type="primary">pstS2</name>
    <name type="ordered locus">SAG1966</name>
</gene>
<comment type="function">
    <text evidence="1">Part of the ABC transporter complex PstSACB involved in phosphate import.</text>
</comment>
<comment type="subunit">
    <text evidence="3">The complex is composed of two ATP-binding proteins (PstB), two transmembrane proteins (PstC and PstA) and a solute-binding protein (PstS).</text>
</comment>
<comment type="subcellular location">
    <subcellularLocation>
        <location evidence="3">Cell membrane</location>
        <topology evidence="3">Lipid-anchor</topology>
    </subcellularLocation>
</comment>
<comment type="similarity">
    <text evidence="3">Belongs to the PstS family.</text>
</comment>